<gene>
    <name evidence="4" type="primary">hfb3</name>
    <name type="ORF">TRIREDRAFT_123967</name>
</gene>
<reference key="1">
    <citation type="journal article" date="2008" name="Nat. Biotechnol.">
        <title>Genome sequencing and analysis of the biomass-degrading fungus Trichoderma reesei (syn. Hypocrea jecorina).</title>
        <authorList>
            <person name="Martinez D."/>
            <person name="Berka R.M."/>
            <person name="Henrissat B."/>
            <person name="Saloheimo M."/>
            <person name="Arvas M."/>
            <person name="Baker S.E."/>
            <person name="Chapman J."/>
            <person name="Chertkov O."/>
            <person name="Coutinho P.M."/>
            <person name="Cullen D."/>
            <person name="Danchin E.G."/>
            <person name="Grigoriev I.V."/>
            <person name="Harris P."/>
            <person name="Jackson M."/>
            <person name="Kubicek C.P."/>
            <person name="Han C.S."/>
            <person name="Ho I."/>
            <person name="Larrondo L.F."/>
            <person name="de Leon A.L."/>
            <person name="Magnuson J.K."/>
            <person name="Merino S."/>
            <person name="Misra M."/>
            <person name="Nelson B."/>
            <person name="Putnam N."/>
            <person name="Robbertse B."/>
            <person name="Salamov A.A."/>
            <person name="Schmoll M."/>
            <person name="Terry A."/>
            <person name="Thayer N."/>
            <person name="Westerholm-Parvinen A."/>
            <person name="Schoch C.L."/>
            <person name="Yao J."/>
            <person name="Barabote R."/>
            <person name="Nelson M.A."/>
            <person name="Detter C."/>
            <person name="Bruce D."/>
            <person name="Kuske C.R."/>
            <person name="Xie G."/>
            <person name="Richardson P."/>
            <person name="Rokhsar D.S."/>
            <person name="Lucas S.M."/>
            <person name="Rubin E.M."/>
            <person name="Dunn-Coleman N."/>
            <person name="Ward M."/>
            <person name="Brettin T.S."/>
        </authorList>
    </citation>
    <scope>NUCLEOTIDE SEQUENCE [LARGE SCALE GENOMIC DNA]</scope>
    <source>
        <strain>QM6a</strain>
    </source>
</reference>
<reference key="2">
    <citation type="journal article" date="2017" name="FEMS Microbiol. Lett.">
        <title>A class II hydrophobin gene, Trhfb3, participates in fungal asexual development of Trichoderma reesei.</title>
        <authorList>
            <person name="He R."/>
            <person name="Li C."/>
            <person name="Feng J."/>
            <person name="Zhang D."/>
        </authorList>
    </citation>
    <scope>INDUCTION</scope>
    <scope>FUNCTION</scope>
    <scope>DISRUPTION PHENOTYPE</scope>
    <scope>TISSUE SPECIFICITY</scope>
    <scope>SUBCELLULAR LOCATION</scope>
</reference>
<name>HYP3_HYPJQ</name>
<accession>G0RVE5</accession>
<sequence length="102" mass="10423">MQFLAVAALLFTTALAAPSSDVNGIIRRANAFCPEGLLYTNPLCCDLDVLGVADVDCVVPPAKPSSCKSFGSVCASIGRKPRCCAVPVAGVALLCTDPIPAI</sequence>
<keyword id="KW-0134">Cell wall</keyword>
<keyword id="KW-0963">Cytoplasm</keyword>
<keyword id="KW-1015">Disulfide bond</keyword>
<keyword id="KW-1185">Reference proteome</keyword>
<keyword id="KW-0964">Secreted</keyword>
<keyword id="KW-0732">Signal</keyword>
<proteinExistence type="evidence at transcript level"/>
<comment type="function">
    <text evidence="3 5">Aerial growth, conidiation, and dispersal of filamentous fungi in the environment rely upon a capability of their secreting small amphipathic proteins called hydrophobins (HPBs) with low sequence identity. Class I can self-assemble into an outermost layer of rodlet bundles on aerial cell surfaces, conferring cellular hydrophobicity that supports fungal growth, development and dispersal; whereas Class II form highly ordered films at water-air interfaces through intermolecular interactions but contribute nothing to the rodlet structure (Probable). Hbf3 is a class II hydrophobin that has a role in vegetative growth and asexual development (PubMed:28013240).</text>
</comment>
<comment type="subunit">
    <text evidence="1">Homotetramer (By similarity). Further self-assembles to form highly ordered films at water-air interfaces through intermolecular interactions (By similarity).</text>
</comment>
<comment type="subcellular location">
    <subcellularLocation>
        <location evidence="1">Secreted</location>
        <location evidence="1">Cell wall</location>
    </subcellularLocation>
    <subcellularLocation>
        <location evidence="1">Secreted</location>
    </subcellularLocation>
    <subcellularLocation>
        <location evidence="3">Cytoplasm</location>
    </subcellularLocation>
    <text evidence="3">Uniformly detected in the cytoplasm of the conidia and hyphae.</text>
</comment>
<comment type="tissue specificity">
    <text evidence="3">Expressed in the conidia, vegetative growth and induction growth stages.</text>
</comment>
<comment type="induction">
    <text evidence="3">Expressed on carbon sources that induce lignocellulytic enzymes such as lactose, xylan, avicel and cellobiose, with the highest expression level detected on cellobiose and the lowest on lactose.</text>
</comment>
<comment type="disruption phenotype">
    <text evidence="3">Leads to a wettable phenotype and to a significantly reduced conidial production (PubMed:28013240). Also exhibits less biomass formation but does not affect the stress susceptibility (PubMed:28013240).</text>
</comment>
<comment type="similarity">
    <text evidence="5">Belongs to the cerato-ulmin hydrophobin family.</text>
</comment>
<organism>
    <name type="scientific">Hypocrea jecorina (strain QM6a)</name>
    <name type="common">Trichoderma reesei</name>
    <dbReference type="NCBI Taxonomy" id="431241"/>
    <lineage>
        <taxon>Eukaryota</taxon>
        <taxon>Fungi</taxon>
        <taxon>Dikarya</taxon>
        <taxon>Ascomycota</taxon>
        <taxon>Pezizomycotina</taxon>
        <taxon>Sordariomycetes</taxon>
        <taxon>Hypocreomycetidae</taxon>
        <taxon>Hypocreales</taxon>
        <taxon>Hypocreaceae</taxon>
        <taxon>Trichoderma</taxon>
    </lineage>
</organism>
<evidence type="ECO:0000250" key="1">
    <source>
        <dbReference type="UniProtKB" id="P52754"/>
    </source>
</evidence>
<evidence type="ECO:0000255" key="2"/>
<evidence type="ECO:0000269" key="3">
    <source>
    </source>
</evidence>
<evidence type="ECO:0000303" key="4">
    <source>
    </source>
</evidence>
<evidence type="ECO:0000305" key="5"/>
<feature type="signal peptide" evidence="2">
    <location>
        <begin position="1"/>
        <end position="16"/>
    </location>
</feature>
<feature type="chain" id="PRO_5003408550" description="Class II hydrophobin 3">
    <location>
        <begin position="17"/>
        <end position="102"/>
    </location>
</feature>
<feature type="disulfide bond" evidence="1">
    <location>
        <begin position="33"/>
        <end position="83"/>
    </location>
</feature>
<feature type="disulfide bond" evidence="1">
    <location>
        <begin position="44"/>
        <end position="74"/>
    </location>
</feature>
<feature type="disulfide bond" evidence="1">
    <location>
        <begin position="45"/>
        <end position="57"/>
    </location>
</feature>
<feature type="disulfide bond" evidence="1">
    <location>
        <begin position="84"/>
        <end position="95"/>
    </location>
</feature>
<dbReference type="EMBL" id="GL985084">
    <property type="protein sequence ID" value="EGR44794.1"/>
    <property type="molecule type" value="Genomic_DNA"/>
</dbReference>
<dbReference type="RefSeq" id="XP_006969202.1">
    <property type="nucleotide sequence ID" value="XM_006969140.1"/>
</dbReference>
<dbReference type="SMR" id="G0RVE5"/>
<dbReference type="STRING" id="431241.G0RVE5"/>
<dbReference type="EnsemblFungi" id="EGR44794">
    <property type="protein sequence ID" value="EGR44794"/>
    <property type="gene ID" value="TRIREDRAFT_123967"/>
</dbReference>
<dbReference type="GeneID" id="18483774"/>
<dbReference type="KEGG" id="tre:TRIREDRAFT_123967"/>
<dbReference type="VEuPathDB" id="FungiDB:TRIREDRAFT_123967"/>
<dbReference type="eggNOG" id="ENOG502SUV9">
    <property type="taxonomic scope" value="Eukaryota"/>
</dbReference>
<dbReference type="HOGENOM" id="CLU_141181_2_2_1"/>
<dbReference type="OrthoDB" id="4500971at2759"/>
<dbReference type="Proteomes" id="UP000008984">
    <property type="component" value="Unassembled WGS sequence"/>
</dbReference>
<dbReference type="GO" id="GO:0005576">
    <property type="term" value="C:extracellular region"/>
    <property type="evidence" value="ECO:0007669"/>
    <property type="project" value="UniProtKB-KW"/>
</dbReference>
<dbReference type="CDD" id="cd23508">
    <property type="entry name" value="hydrophobin_II"/>
    <property type="match status" value="1"/>
</dbReference>
<dbReference type="Gene3D" id="3.20.120.10">
    <property type="entry name" value="Hydrophobin"/>
    <property type="match status" value="1"/>
</dbReference>
<dbReference type="InterPro" id="IPR010636">
    <property type="entry name" value="Cerato-ulmin_hydrophobin"/>
</dbReference>
<dbReference type="InterPro" id="IPR036686">
    <property type="entry name" value="Hydrophobin_sf"/>
</dbReference>
<dbReference type="PANTHER" id="PTHR42341">
    <property type="entry name" value="HYDROPHOBIN"/>
    <property type="match status" value="1"/>
</dbReference>
<dbReference type="PANTHER" id="PTHR42341:SF1">
    <property type="entry name" value="HYDROPHOBIN"/>
    <property type="match status" value="1"/>
</dbReference>
<dbReference type="Pfam" id="PF06766">
    <property type="entry name" value="Hydrophobin_2"/>
    <property type="match status" value="1"/>
</dbReference>
<dbReference type="SUPFAM" id="SSF101751">
    <property type="entry name" value="Hydrophobin II, HfbII"/>
    <property type="match status" value="1"/>
</dbReference>
<protein>
    <recommendedName>
        <fullName evidence="4">Class II hydrophobin 3</fullName>
    </recommendedName>
    <alternativeName>
        <fullName evidence="4">Hydrophobin III</fullName>
        <shortName evidence="4">HFBIII</shortName>
    </alternativeName>
</protein>